<evidence type="ECO:0000255" key="1">
    <source>
        <dbReference type="HAMAP-Rule" id="MF_00134"/>
    </source>
</evidence>
<comment type="catalytic activity">
    <reaction evidence="1">
        <text>1-(2-carboxyphenylamino)-1-deoxy-D-ribulose 5-phosphate + H(+) = (1S,2R)-1-C-(indol-3-yl)glycerol 3-phosphate + CO2 + H2O</text>
        <dbReference type="Rhea" id="RHEA:23476"/>
        <dbReference type="ChEBI" id="CHEBI:15377"/>
        <dbReference type="ChEBI" id="CHEBI:15378"/>
        <dbReference type="ChEBI" id="CHEBI:16526"/>
        <dbReference type="ChEBI" id="CHEBI:58613"/>
        <dbReference type="ChEBI" id="CHEBI:58866"/>
        <dbReference type="EC" id="4.1.1.48"/>
    </reaction>
</comment>
<comment type="pathway">
    <text evidence="1">Amino-acid biosynthesis; L-tryptophan biosynthesis; L-tryptophan from chorismate: step 4/5.</text>
</comment>
<comment type="similarity">
    <text evidence="1">Belongs to the TrpC family.</text>
</comment>
<keyword id="KW-0028">Amino-acid biosynthesis</keyword>
<keyword id="KW-0057">Aromatic amino acid biosynthesis</keyword>
<keyword id="KW-0210">Decarboxylase</keyword>
<keyword id="KW-0456">Lyase</keyword>
<keyword id="KW-0822">Tryptophan biosynthesis</keyword>
<feature type="chain" id="PRO_1000018502" description="Indole-3-glycerol phosphate synthase">
    <location>
        <begin position="1"/>
        <end position="272"/>
    </location>
</feature>
<dbReference type="EC" id="4.1.1.48" evidence="1"/>
<dbReference type="EMBL" id="CP000580">
    <property type="protein sequence ID" value="ABN98846.1"/>
    <property type="molecule type" value="Genomic_DNA"/>
</dbReference>
<dbReference type="SMR" id="A3Q119"/>
<dbReference type="KEGG" id="mjl:Mjls_3067"/>
<dbReference type="HOGENOM" id="CLU_034247_0_0_11"/>
<dbReference type="BioCyc" id="MSP164757:G1G8C-3092-MONOMER"/>
<dbReference type="UniPathway" id="UPA00035">
    <property type="reaction ID" value="UER00043"/>
</dbReference>
<dbReference type="GO" id="GO:0004425">
    <property type="term" value="F:indole-3-glycerol-phosphate synthase activity"/>
    <property type="evidence" value="ECO:0007669"/>
    <property type="project" value="UniProtKB-UniRule"/>
</dbReference>
<dbReference type="GO" id="GO:0004640">
    <property type="term" value="F:phosphoribosylanthranilate isomerase activity"/>
    <property type="evidence" value="ECO:0007669"/>
    <property type="project" value="TreeGrafter"/>
</dbReference>
<dbReference type="GO" id="GO:0000162">
    <property type="term" value="P:L-tryptophan biosynthetic process"/>
    <property type="evidence" value="ECO:0007669"/>
    <property type="project" value="UniProtKB-UniRule"/>
</dbReference>
<dbReference type="CDD" id="cd00331">
    <property type="entry name" value="IGPS"/>
    <property type="match status" value="1"/>
</dbReference>
<dbReference type="FunFam" id="3.20.20.70:FF:000024">
    <property type="entry name" value="Indole-3-glycerol phosphate synthase"/>
    <property type="match status" value="1"/>
</dbReference>
<dbReference type="Gene3D" id="3.20.20.70">
    <property type="entry name" value="Aldolase class I"/>
    <property type="match status" value="1"/>
</dbReference>
<dbReference type="HAMAP" id="MF_00134_A">
    <property type="entry name" value="IGPS_A"/>
    <property type="match status" value="1"/>
</dbReference>
<dbReference type="HAMAP" id="MF_00134_B">
    <property type="entry name" value="IGPS_B"/>
    <property type="match status" value="1"/>
</dbReference>
<dbReference type="InterPro" id="IPR013785">
    <property type="entry name" value="Aldolase_TIM"/>
</dbReference>
<dbReference type="InterPro" id="IPR045186">
    <property type="entry name" value="Indole-3-glycerol_P_synth"/>
</dbReference>
<dbReference type="InterPro" id="IPR013798">
    <property type="entry name" value="Indole-3-glycerol_P_synth_dom"/>
</dbReference>
<dbReference type="InterPro" id="IPR001468">
    <property type="entry name" value="Indole-3-GlycerolPSynthase_CS"/>
</dbReference>
<dbReference type="InterPro" id="IPR011060">
    <property type="entry name" value="RibuloseP-bd_barrel"/>
</dbReference>
<dbReference type="NCBIfam" id="NF001369">
    <property type="entry name" value="PRK00278.1-1"/>
    <property type="match status" value="1"/>
</dbReference>
<dbReference type="NCBIfam" id="NF001377">
    <property type="entry name" value="PRK00278.2-4"/>
    <property type="match status" value="1"/>
</dbReference>
<dbReference type="PANTHER" id="PTHR22854:SF2">
    <property type="entry name" value="INDOLE-3-GLYCEROL-PHOSPHATE SYNTHASE"/>
    <property type="match status" value="1"/>
</dbReference>
<dbReference type="PANTHER" id="PTHR22854">
    <property type="entry name" value="TRYPTOPHAN BIOSYNTHESIS PROTEIN"/>
    <property type="match status" value="1"/>
</dbReference>
<dbReference type="Pfam" id="PF00218">
    <property type="entry name" value="IGPS"/>
    <property type="match status" value="1"/>
</dbReference>
<dbReference type="SUPFAM" id="SSF51366">
    <property type="entry name" value="Ribulose-phoshate binding barrel"/>
    <property type="match status" value="1"/>
</dbReference>
<dbReference type="PROSITE" id="PS00614">
    <property type="entry name" value="IGPS"/>
    <property type="match status" value="1"/>
</dbReference>
<name>TRPC_MYCSJ</name>
<organism>
    <name type="scientific">Mycobacterium sp. (strain JLS)</name>
    <dbReference type="NCBI Taxonomy" id="164757"/>
    <lineage>
        <taxon>Bacteria</taxon>
        <taxon>Bacillati</taxon>
        <taxon>Actinomycetota</taxon>
        <taxon>Actinomycetes</taxon>
        <taxon>Mycobacteriales</taxon>
        <taxon>Mycobacteriaceae</taxon>
        <taxon>Mycobacterium</taxon>
    </lineage>
</organism>
<accession>A3Q119</accession>
<reference key="1">
    <citation type="submission" date="2007-02" db="EMBL/GenBank/DDBJ databases">
        <title>Complete sequence of Mycobacterium sp. JLS.</title>
        <authorList>
            <consortium name="US DOE Joint Genome Institute"/>
            <person name="Copeland A."/>
            <person name="Lucas S."/>
            <person name="Lapidus A."/>
            <person name="Barry K."/>
            <person name="Detter J.C."/>
            <person name="Glavina del Rio T."/>
            <person name="Hammon N."/>
            <person name="Israni S."/>
            <person name="Dalin E."/>
            <person name="Tice H."/>
            <person name="Pitluck S."/>
            <person name="Chain P."/>
            <person name="Malfatti S."/>
            <person name="Shin M."/>
            <person name="Vergez L."/>
            <person name="Schmutz J."/>
            <person name="Larimer F."/>
            <person name="Land M."/>
            <person name="Hauser L."/>
            <person name="Kyrpides N."/>
            <person name="Mikhailova N."/>
            <person name="Miller C.D."/>
            <person name="Anderson A.J."/>
            <person name="Sims R.C."/>
            <person name="Richardson P."/>
        </authorList>
    </citation>
    <scope>NUCLEOTIDE SEQUENCE [LARGE SCALE GENOMIC DNA]</scope>
    <source>
        <strain>JLS</strain>
    </source>
</reference>
<gene>
    <name evidence="1" type="primary">trpC</name>
    <name type="ordered locus">Mjls_3067</name>
</gene>
<sequence length="272" mass="28666">MSSATVLDSIIEGVRADVAAREAVVSLTEIKERAQRAKPPLDVMAALREPGIGVIAEVKRASPSRGALAQIGDPADLARAYQDGGARVISVLTEQRRFNGSLDDLDAVRAAVSIPVLRKDFIVRPYQIHEARAHGADMLLLIVAALEQPVLESLLERTESLGMTALVEVHTEAEADRALQAGARVIGVNARNLKTLEVDRDCFARIAPGLPSNVIRIAESGVRGPADLLAYAGAGADAVLVGEGLVTSRDPRSAVADLVTAGTHPSCPKPSR</sequence>
<protein>
    <recommendedName>
        <fullName evidence="1">Indole-3-glycerol phosphate synthase</fullName>
        <shortName evidence="1">IGPS</shortName>
        <ecNumber evidence="1">4.1.1.48</ecNumber>
    </recommendedName>
</protein>
<proteinExistence type="inferred from homology"/>